<accession>Q5UPC3</accession>
<sequence length="186" mass="21985">MSFIFCDGDKDKLVDFLSRKDSWSDIELTLTNGSEKKILYVHKNILKNCRYFEGTFSFYENSYEYDNIEIEVPHINIACDIIYLFYGIELPESTDWKYKIHLHLLQEFFLLQPISVSDLKIPENDFEILINEIISFGHTDQIVKLIFNNMPESYDVGKIPQDILEIIFNSNKKIYQILDKIKNAIH</sequence>
<dbReference type="EMBL" id="AY653733">
    <property type="protein sequence ID" value="AAV50324.1"/>
    <property type="molecule type" value="Genomic_DNA"/>
</dbReference>
<dbReference type="SMR" id="Q5UPC3"/>
<dbReference type="KEGG" id="vg:9924637"/>
<dbReference type="OrthoDB" id="32891at10239"/>
<dbReference type="Proteomes" id="UP000001134">
    <property type="component" value="Genome"/>
</dbReference>
<proteinExistence type="predicted"/>
<feature type="chain" id="PRO_0000250621" description="Uncharacterized protein L49">
    <location>
        <begin position="1"/>
        <end position="186"/>
    </location>
</feature>
<gene>
    <name type="ordered locus">MIMI_L49</name>
</gene>
<organism>
    <name type="scientific">Acanthamoeba polyphaga mimivirus</name>
    <name type="common">APMV</name>
    <dbReference type="NCBI Taxonomy" id="212035"/>
    <lineage>
        <taxon>Viruses</taxon>
        <taxon>Varidnaviria</taxon>
        <taxon>Bamfordvirae</taxon>
        <taxon>Nucleocytoviricota</taxon>
        <taxon>Megaviricetes</taxon>
        <taxon>Imitervirales</taxon>
        <taxon>Mimiviridae</taxon>
        <taxon>Megamimivirinae</taxon>
        <taxon>Mimivirus</taxon>
        <taxon>Mimivirus bradfordmassiliense</taxon>
    </lineage>
</organism>
<reference key="1">
    <citation type="journal article" date="2004" name="Science">
        <title>The 1.2-megabase genome sequence of Mimivirus.</title>
        <authorList>
            <person name="Raoult D."/>
            <person name="Audic S."/>
            <person name="Robert C."/>
            <person name="Abergel C."/>
            <person name="Renesto P."/>
            <person name="Ogata H."/>
            <person name="La Scola B."/>
            <person name="Susan M."/>
            <person name="Claverie J.-M."/>
        </authorList>
    </citation>
    <scope>NUCLEOTIDE SEQUENCE [LARGE SCALE GENOMIC DNA]</scope>
    <source>
        <strain>Rowbotham-Bradford</strain>
    </source>
</reference>
<organismHost>
    <name type="scientific">Acanthamoeba polyphaga</name>
    <name type="common">Amoeba</name>
    <dbReference type="NCBI Taxonomy" id="5757"/>
</organismHost>
<name>YL049_MIMIV</name>
<keyword id="KW-1185">Reference proteome</keyword>
<protein>
    <recommendedName>
        <fullName>Uncharacterized protein L49</fullName>
    </recommendedName>
</protein>